<reference key="1">
    <citation type="journal article" date="2008" name="Chem. Biol. Interact.">
        <title>Extending the Bacillus cereus group genomics to putative food-borne pathogens of different toxicity.</title>
        <authorList>
            <person name="Lapidus A."/>
            <person name="Goltsman E."/>
            <person name="Auger S."/>
            <person name="Galleron N."/>
            <person name="Segurens B."/>
            <person name="Dossat C."/>
            <person name="Land M.L."/>
            <person name="Broussolle V."/>
            <person name="Brillard J."/>
            <person name="Guinebretiere M.-H."/>
            <person name="Sanchis V."/>
            <person name="Nguen-the C."/>
            <person name="Lereclus D."/>
            <person name="Richardson P."/>
            <person name="Wincker P."/>
            <person name="Weissenbach J."/>
            <person name="Ehrlich S.D."/>
            <person name="Sorokin A."/>
        </authorList>
    </citation>
    <scope>NUCLEOTIDE SEQUENCE [LARGE SCALE GENOMIC DNA]</scope>
    <source>
        <strain>KBAB4</strain>
    </source>
</reference>
<evidence type="ECO:0000255" key="1">
    <source>
        <dbReference type="HAMAP-Rule" id="MF_00131"/>
    </source>
</evidence>
<accession>A9VJW3</accession>
<proteinExistence type="inferred from homology"/>
<feature type="chain" id="PRO_1000095693" description="Tryptophan synthase alpha chain">
    <location>
        <begin position="1"/>
        <end position="258"/>
    </location>
</feature>
<feature type="active site" description="Proton acceptor" evidence="1">
    <location>
        <position position="47"/>
    </location>
</feature>
<feature type="active site" description="Proton acceptor" evidence="1">
    <location>
        <position position="58"/>
    </location>
</feature>
<gene>
    <name evidence="1" type="primary">trpA</name>
    <name type="ordered locus">BcerKBAB4_1150</name>
</gene>
<sequence>MGVEKIIAAFENGKKAFIPYVMGGDGGLEKLKERIRFLDEAGASIVEIGIPFSDPVADGPTIQRAGKRALDSGVTLKGIFQALIEVRQEVQIPFVLMTYLNPVLAFGKERFIESCLEAGVDGIIVPDLPYEEQDIIAPLLRVANIALIPLVTVTSPIERIEKITSESQGFVYAVTVAGVTGVRQNFKDEIRSYLEKVKEHVHLPVVAGFGISTREQIEEMITICDGVVVGSKVIELLENEKREEICELIHAVKETEEA</sequence>
<organism>
    <name type="scientific">Bacillus mycoides (strain KBAB4)</name>
    <name type="common">Bacillus weihenstephanensis</name>
    <dbReference type="NCBI Taxonomy" id="315730"/>
    <lineage>
        <taxon>Bacteria</taxon>
        <taxon>Bacillati</taxon>
        <taxon>Bacillota</taxon>
        <taxon>Bacilli</taxon>
        <taxon>Bacillales</taxon>
        <taxon>Bacillaceae</taxon>
        <taxon>Bacillus</taxon>
        <taxon>Bacillus cereus group</taxon>
    </lineage>
</organism>
<comment type="function">
    <text evidence="1">The alpha subunit is responsible for the aldol cleavage of indoleglycerol phosphate to indole and glyceraldehyde 3-phosphate.</text>
</comment>
<comment type="catalytic activity">
    <reaction evidence="1">
        <text>(1S,2R)-1-C-(indol-3-yl)glycerol 3-phosphate + L-serine = D-glyceraldehyde 3-phosphate + L-tryptophan + H2O</text>
        <dbReference type="Rhea" id="RHEA:10532"/>
        <dbReference type="ChEBI" id="CHEBI:15377"/>
        <dbReference type="ChEBI" id="CHEBI:33384"/>
        <dbReference type="ChEBI" id="CHEBI:57912"/>
        <dbReference type="ChEBI" id="CHEBI:58866"/>
        <dbReference type="ChEBI" id="CHEBI:59776"/>
        <dbReference type="EC" id="4.2.1.20"/>
    </reaction>
</comment>
<comment type="pathway">
    <text evidence="1">Amino-acid biosynthesis; L-tryptophan biosynthesis; L-tryptophan from chorismate: step 5/5.</text>
</comment>
<comment type="subunit">
    <text evidence="1">Tetramer of two alpha and two beta chains.</text>
</comment>
<comment type="similarity">
    <text evidence="1">Belongs to the TrpA family.</text>
</comment>
<protein>
    <recommendedName>
        <fullName evidence="1">Tryptophan synthase alpha chain</fullName>
        <ecNumber evidence="1">4.2.1.20</ecNumber>
    </recommendedName>
</protein>
<dbReference type="EC" id="4.2.1.20" evidence="1"/>
<dbReference type="EMBL" id="CP000903">
    <property type="protein sequence ID" value="ABY42399.1"/>
    <property type="molecule type" value="Genomic_DNA"/>
</dbReference>
<dbReference type="RefSeq" id="WP_002140872.1">
    <property type="nucleotide sequence ID" value="NC_010184.1"/>
</dbReference>
<dbReference type="SMR" id="A9VJW3"/>
<dbReference type="KEGG" id="bwe:BcerKBAB4_1150"/>
<dbReference type="eggNOG" id="COG0159">
    <property type="taxonomic scope" value="Bacteria"/>
</dbReference>
<dbReference type="HOGENOM" id="CLU_016734_0_0_9"/>
<dbReference type="UniPathway" id="UPA00035">
    <property type="reaction ID" value="UER00044"/>
</dbReference>
<dbReference type="Proteomes" id="UP000002154">
    <property type="component" value="Chromosome"/>
</dbReference>
<dbReference type="GO" id="GO:0005829">
    <property type="term" value="C:cytosol"/>
    <property type="evidence" value="ECO:0007669"/>
    <property type="project" value="TreeGrafter"/>
</dbReference>
<dbReference type="GO" id="GO:0004834">
    <property type="term" value="F:tryptophan synthase activity"/>
    <property type="evidence" value="ECO:0007669"/>
    <property type="project" value="UniProtKB-UniRule"/>
</dbReference>
<dbReference type="CDD" id="cd04724">
    <property type="entry name" value="Tryptophan_synthase_alpha"/>
    <property type="match status" value="1"/>
</dbReference>
<dbReference type="FunFam" id="3.20.20.70:FF:000037">
    <property type="entry name" value="Tryptophan synthase alpha chain"/>
    <property type="match status" value="1"/>
</dbReference>
<dbReference type="Gene3D" id="3.20.20.70">
    <property type="entry name" value="Aldolase class I"/>
    <property type="match status" value="1"/>
</dbReference>
<dbReference type="HAMAP" id="MF_00131">
    <property type="entry name" value="Trp_synth_alpha"/>
    <property type="match status" value="1"/>
</dbReference>
<dbReference type="InterPro" id="IPR013785">
    <property type="entry name" value="Aldolase_TIM"/>
</dbReference>
<dbReference type="InterPro" id="IPR011060">
    <property type="entry name" value="RibuloseP-bd_barrel"/>
</dbReference>
<dbReference type="InterPro" id="IPR018204">
    <property type="entry name" value="Trp_synthase_alpha_AS"/>
</dbReference>
<dbReference type="InterPro" id="IPR002028">
    <property type="entry name" value="Trp_synthase_suA"/>
</dbReference>
<dbReference type="NCBIfam" id="TIGR00262">
    <property type="entry name" value="trpA"/>
    <property type="match status" value="1"/>
</dbReference>
<dbReference type="PANTHER" id="PTHR43406:SF1">
    <property type="entry name" value="TRYPTOPHAN SYNTHASE ALPHA CHAIN, CHLOROPLASTIC"/>
    <property type="match status" value="1"/>
</dbReference>
<dbReference type="PANTHER" id="PTHR43406">
    <property type="entry name" value="TRYPTOPHAN SYNTHASE, ALPHA CHAIN"/>
    <property type="match status" value="1"/>
</dbReference>
<dbReference type="Pfam" id="PF00290">
    <property type="entry name" value="Trp_syntA"/>
    <property type="match status" value="1"/>
</dbReference>
<dbReference type="SUPFAM" id="SSF51366">
    <property type="entry name" value="Ribulose-phoshate binding barrel"/>
    <property type="match status" value="1"/>
</dbReference>
<dbReference type="PROSITE" id="PS00167">
    <property type="entry name" value="TRP_SYNTHASE_ALPHA"/>
    <property type="match status" value="1"/>
</dbReference>
<keyword id="KW-0028">Amino-acid biosynthesis</keyword>
<keyword id="KW-0057">Aromatic amino acid biosynthesis</keyword>
<keyword id="KW-0456">Lyase</keyword>
<keyword id="KW-0822">Tryptophan biosynthesis</keyword>
<name>TRPA_BACMK</name>